<sequence>MADKGTDNFDLEGNNWYIVHEAECTDSIDTLDDLCDESNDDSNISNLIDDDVVDQGNSLALYNAQINEDCDNALAHLKRKYNKSPEQAVAELSPQLQAVKITPERHSKRRLFQDSGIFEDEAENSLTQVESESQAGPSSQDGGGDINLLLLQSSNRRATMLAKFKEWYGVSYNEITRIYKSDKSCSDNWVIVIFRAAVEVLESSKIVLKQHCTYIQVKIFGFSALYLVQFKSAKSRETVQKLMCSILNIQEYQMLCDPPKLRSVPTALYFYKHAMLTESSVFGQTPDWIAKQTLVSHQAATTAETFELSRMVQWAYDNNYVDECDIAYHYAMYAEEDANAAAYLKSNNQVKHVRDCSTMVRMYKRYEMRDMSMSEWIYKCCDECSEEGDWKPISQFLKYQGVNILSFLIVLKSFLKGIPKKNCIVIHGPPDTGKSLFCYSFIKFLKGKVVSYVNRSSHFWLQPLMDCKVGFMDDATYVCWTYIDQNLRNALDGNPMCIDAKHRAPQQLKLPPMLITSNIDIKQEQSLMYLHSRIQCFNFPNKMPILDDGSPMYTFTDGTWKSFFQKLGRQLELTDPEEENNGVPSRTFRCTSRSNSDSY</sequence>
<name>VE1_HPV04</name>
<comment type="function">
    <text evidence="1">ATP-dependent DNA 3'-5' helicase required for initiation of viral DNA replication. It forms a complex with the viral E2 protein. The E1-E2 complex binds to the replication origin which contains binding sites for both proteins. During the initial step, a dimer of E1 interacts with a dimer of protein E2 leading to a complex that binds the viral origin of replication with high specificity. Then, a second dimer of E1 displaces the E2 dimer in an ATP-dependent manner to form the E1 tetramer. Following this, two E1 monomers are added to each half of the site, which results in the formation of two E1 trimers on the viral ori. Subsequently, two hexamers will be created. The double hexamer acts as a bi-directional helicase machinery and unwinds the viral DNA and then recruits the host DNA polymerase to start replication.</text>
</comment>
<comment type="catalytic activity">
    <reaction evidence="1">
        <text>Couples ATP hydrolysis with the unwinding of duplex DNA by translocating in the 3'-5' direction.</text>
        <dbReference type="EC" id="5.6.2.4"/>
    </reaction>
</comment>
<comment type="catalytic activity">
    <reaction evidence="1">
        <text>ATP + H2O = ADP + phosphate + H(+)</text>
        <dbReference type="Rhea" id="RHEA:13065"/>
        <dbReference type="ChEBI" id="CHEBI:15377"/>
        <dbReference type="ChEBI" id="CHEBI:15378"/>
        <dbReference type="ChEBI" id="CHEBI:30616"/>
        <dbReference type="ChEBI" id="CHEBI:43474"/>
        <dbReference type="ChEBI" id="CHEBI:456216"/>
        <dbReference type="EC" id="5.6.2.4"/>
    </reaction>
</comment>
<comment type="subunit">
    <text evidence="1">Can form hexamers. Interacts with E2 protein; this interaction increases E1 DNA binding specificity. Interacts with host DNA polymerase subunit POLA2. Interacts with host single stranded DNA-binding protein RPA1. Interacts with host TOP1; this interaction stimulates the enzymatic activity of TOP1.</text>
</comment>
<comment type="subcellular location">
    <subcellularLocation>
        <location evidence="1">Host nucleus</location>
    </subcellularLocation>
</comment>
<comment type="PTM">
    <text evidence="1">Phosphorylated.</text>
</comment>
<comment type="PTM">
    <text evidence="1">Sumoylated.</text>
</comment>
<comment type="similarity">
    <text evidence="1">Belongs to the papillomaviridae E1 protein family.</text>
</comment>
<gene>
    <name evidence="1" type="primary">E1</name>
</gene>
<organismHost>
    <name type="scientific">Homo sapiens</name>
    <name type="common">Human</name>
    <dbReference type="NCBI Taxonomy" id="9606"/>
</organismHost>
<evidence type="ECO:0000255" key="1">
    <source>
        <dbReference type="HAMAP-Rule" id="MF_04000"/>
    </source>
</evidence>
<evidence type="ECO:0000256" key="2">
    <source>
        <dbReference type="SAM" id="MobiDB-lite"/>
    </source>
</evidence>
<organism>
    <name type="scientific">Human papillomavirus 4</name>
    <dbReference type="NCBI Taxonomy" id="10617"/>
    <lineage>
        <taxon>Viruses</taxon>
        <taxon>Monodnaviria</taxon>
        <taxon>Shotokuvirae</taxon>
        <taxon>Cossaviricota</taxon>
        <taxon>Papovaviricetes</taxon>
        <taxon>Zurhausenvirales</taxon>
        <taxon>Papillomaviridae</taxon>
        <taxon>Firstpapillomavirinae</taxon>
        <taxon>Gammapapillomavirus</taxon>
        <taxon>Gammapapillomavirus 1</taxon>
    </lineage>
</organism>
<feature type="chain" id="PRO_0000133100" description="Replication protein E1">
    <location>
        <begin position="1"/>
        <end position="599"/>
    </location>
</feature>
<feature type="domain" description="SF3 helicase" evidence="1">
    <location>
        <begin position="402"/>
        <end position="552"/>
    </location>
</feature>
<feature type="region of interest" description="Disordered" evidence="2">
    <location>
        <begin position="124"/>
        <end position="144"/>
    </location>
</feature>
<feature type="region of interest" description="DNA-binding region" evidence="1">
    <location>
        <begin position="139"/>
        <end position="303"/>
    </location>
</feature>
<feature type="region of interest" description="Disordered" evidence="2">
    <location>
        <begin position="575"/>
        <end position="599"/>
    </location>
</feature>
<feature type="short sequence motif" description="Nuclear localization signal" evidence="1">
    <location>
        <begin position="78"/>
        <end position="80"/>
    </location>
</feature>
<feature type="short sequence motif" description="Nuclear export signal" evidence="1">
    <location>
        <begin position="92"/>
        <end position="101"/>
    </location>
</feature>
<feature type="compositionally biased region" description="Polar residues" evidence="2">
    <location>
        <begin position="124"/>
        <end position="140"/>
    </location>
</feature>
<feature type="compositionally biased region" description="Polar residues" evidence="2">
    <location>
        <begin position="582"/>
        <end position="599"/>
    </location>
</feature>
<feature type="binding site" evidence="1">
    <location>
        <begin position="428"/>
        <end position="435"/>
    </location>
    <ligand>
        <name>ATP</name>
        <dbReference type="ChEBI" id="CHEBI:30616"/>
    </ligand>
</feature>
<feature type="modified residue" description="Phosphoserine; by host" evidence="1">
    <location>
        <position position="84"/>
    </location>
</feature>
<feature type="modified residue" description="Phosphoserine; by host" evidence="1">
    <location>
        <position position="93"/>
    </location>
</feature>
<feature type="cross-link" description="Glycyl lysine isopeptide (Lys-Gly) (interchain with G-Cter in SUMO)" evidence="1">
    <location>
        <position position="509"/>
    </location>
</feature>
<protein>
    <recommendedName>
        <fullName evidence="1">Replication protein E1</fullName>
        <ecNumber evidence="1">5.6.2.4</ecNumber>
    </recommendedName>
    <alternativeName>
        <fullName evidence="1">ATP-dependent helicase E1</fullName>
    </alternativeName>
    <alternativeName>
        <fullName evidence="1">DNA 3'-5' helicase E1</fullName>
    </alternativeName>
</protein>
<proteinExistence type="inferred from homology"/>
<keyword id="KW-0067">ATP-binding</keyword>
<keyword id="KW-0235">DNA replication</keyword>
<keyword id="KW-0238">DNA-binding</keyword>
<keyword id="KW-0244">Early protein</keyword>
<keyword id="KW-0347">Helicase</keyword>
<keyword id="KW-1048">Host nucleus</keyword>
<keyword id="KW-0378">Hydrolase</keyword>
<keyword id="KW-0413">Isomerase</keyword>
<keyword id="KW-1017">Isopeptide bond</keyword>
<keyword id="KW-0547">Nucleotide-binding</keyword>
<keyword id="KW-0597">Phosphoprotein</keyword>
<keyword id="KW-1185">Reference proteome</keyword>
<keyword id="KW-0832">Ubl conjugation</keyword>
<dbReference type="EC" id="5.6.2.4" evidence="1"/>
<dbReference type="EMBL" id="X70827">
    <property type="protein sequence ID" value="CAA50159.1"/>
    <property type="molecule type" value="Genomic_DNA"/>
</dbReference>
<dbReference type="RefSeq" id="NP_040891.1">
    <property type="nucleotide sequence ID" value="NC_001457.1"/>
</dbReference>
<dbReference type="SMR" id="Q07846"/>
<dbReference type="KEGG" id="vg:1489453"/>
<dbReference type="OrthoDB" id="4795at10239"/>
<dbReference type="Proteomes" id="UP000009253">
    <property type="component" value="Genome"/>
</dbReference>
<dbReference type="GO" id="GO:0042025">
    <property type="term" value="C:host cell nucleus"/>
    <property type="evidence" value="ECO:0007669"/>
    <property type="project" value="UniProtKB-SubCell"/>
</dbReference>
<dbReference type="GO" id="GO:0005524">
    <property type="term" value="F:ATP binding"/>
    <property type="evidence" value="ECO:0007669"/>
    <property type="project" value="UniProtKB-UniRule"/>
</dbReference>
<dbReference type="GO" id="GO:0016887">
    <property type="term" value="F:ATP hydrolysis activity"/>
    <property type="evidence" value="ECO:0007669"/>
    <property type="project" value="RHEA"/>
</dbReference>
<dbReference type="GO" id="GO:0003677">
    <property type="term" value="F:DNA binding"/>
    <property type="evidence" value="ECO:0007669"/>
    <property type="project" value="UniProtKB-UniRule"/>
</dbReference>
<dbReference type="GO" id="GO:0003678">
    <property type="term" value="F:DNA helicase activity"/>
    <property type="evidence" value="ECO:0007669"/>
    <property type="project" value="UniProtKB-UniRule"/>
</dbReference>
<dbReference type="GO" id="GO:0006260">
    <property type="term" value="P:DNA replication"/>
    <property type="evidence" value="ECO:0007669"/>
    <property type="project" value="UniProtKB-UniRule"/>
</dbReference>
<dbReference type="Gene3D" id="3.40.1310.10">
    <property type="match status" value="1"/>
</dbReference>
<dbReference type="Gene3D" id="3.40.50.300">
    <property type="entry name" value="P-loop containing nucleotide triphosphate hydrolases"/>
    <property type="match status" value="1"/>
</dbReference>
<dbReference type="Gene3D" id="1.10.10.510">
    <property type="entry name" value="Zinc finger, large T-antigen D1 domain"/>
    <property type="match status" value="1"/>
</dbReference>
<dbReference type="HAMAP" id="MF_04000">
    <property type="entry name" value="PPV_E1"/>
    <property type="match status" value="1"/>
</dbReference>
<dbReference type="InterPro" id="IPR014015">
    <property type="entry name" value="Helicase_SF3_DNA-vir"/>
</dbReference>
<dbReference type="InterPro" id="IPR027417">
    <property type="entry name" value="P-loop_NTPase"/>
</dbReference>
<dbReference type="InterPro" id="IPR001177">
    <property type="entry name" value="PPV_DNA_helicase_E1_C"/>
</dbReference>
<dbReference type="InterPro" id="IPR014000">
    <property type="entry name" value="PPV_DNA_helicase_E1_N"/>
</dbReference>
<dbReference type="InterPro" id="IPR046832">
    <property type="entry name" value="PPV_E1_DBD"/>
</dbReference>
<dbReference type="InterPro" id="IPR046935">
    <property type="entry name" value="PPV_E1_DBD_sf"/>
</dbReference>
<dbReference type="InterPro" id="IPR016393">
    <property type="entry name" value="Rep_E1_papillomaV"/>
</dbReference>
<dbReference type="InterPro" id="IPR037102">
    <property type="entry name" value="Znf_lg_T-Ag_D1_dom_sf"/>
</dbReference>
<dbReference type="Pfam" id="PF00519">
    <property type="entry name" value="PPV_E1_C"/>
    <property type="match status" value="1"/>
</dbReference>
<dbReference type="Pfam" id="PF20450">
    <property type="entry name" value="PPV_E1_DBD"/>
    <property type="match status" value="1"/>
</dbReference>
<dbReference type="Pfam" id="PF00524">
    <property type="entry name" value="PPV_E1_N"/>
    <property type="match status" value="1"/>
</dbReference>
<dbReference type="PIRSF" id="PIRSF003383">
    <property type="entry name" value="Rep_E1_papillomaV"/>
    <property type="match status" value="1"/>
</dbReference>
<dbReference type="SUPFAM" id="SSF55464">
    <property type="entry name" value="Origin of replication-binding domain, RBD-like"/>
    <property type="match status" value="1"/>
</dbReference>
<dbReference type="SUPFAM" id="SSF52540">
    <property type="entry name" value="P-loop containing nucleoside triphosphate hydrolases"/>
    <property type="match status" value="1"/>
</dbReference>
<dbReference type="PROSITE" id="PS51206">
    <property type="entry name" value="SF3_HELICASE_1"/>
    <property type="match status" value="1"/>
</dbReference>
<accession>Q07846</accession>
<reference key="1">
    <citation type="journal article" date="1993" name="Virology">
        <title>Two novel types of human papillomavirus, HPV 63 and HPV 65: comparisons of their clinical and histological features and DNA sequences to other HPV types.</title>
        <authorList>
            <person name="Egawa K."/>
            <person name="Delius H."/>
            <person name="Matsukura T."/>
            <person name="Kawashima M."/>
            <person name="de Villiers E.M."/>
        </authorList>
    </citation>
    <scope>NUCLEOTIDE SEQUENCE [GENOMIC DNA]</scope>
</reference>